<organism>
    <name type="scientific">Mycosarcoma maydis</name>
    <name type="common">Corn smut fungus</name>
    <name type="synonym">Ustilago maydis</name>
    <dbReference type="NCBI Taxonomy" id="5270"/>
    <lineage>
        <taxon>Eukaryota</taxon>
        <taxon>Fungi</taxon>
        <taxon>Dikarya</taxon>
        <taxon>Basidiomycota</taxon>
        <taxon>Ustilaginomycotina</taxon>
        <taxon>Ustilaginomycetes</taxon>
        <taxon>Ustilaginales</taxon>
        <taxon>Ustilaginaceae</taxon>
        <taxon>Mycosarcoma</taxon>
    </lineage>
</organism>
<proteinExistence type="inferred from homology"/>
<sequence length="1097" mass="116499">MSFNFKWPTFSDEFHTSAAQMLNSALNRGPKPKVIADDILVEELGMGTIPPELEILEIGDLGTDRFRGIFRLTYAGDAHLVLKTKVQANPLSKPNRPDIGLFPSSNASRGILFAAAPLIVPMHLRLSSVKLRAIVVLVVSKAKGITLVFKNDPLESVEVSSTFDSVAVIQKYLQQEIEGQLREMFREDLPGIIHRLSQKWLSGEAKSEKDKVKQKAEAEEPPARSREPTLTRSTSEPLVALETASAPGGTPRKSHSKAKKHSRSGASVADFAASPCQSPQRPRQSPRRPRHVAKAASTSAVPLHSEFSATHASPFDAAFPDIENYDPTYGLRPDDLPTHSGFSGLGRLAQRGLGGLKDLTASPVFDLDTALGAADVDLDGAAVFEDLNRQSDDEGSEAEQSQDAHSSSHDGKHDEGDATTDSDLDAVLHDVGDDVSDLDVQERDNLVDTSIDYSRFGYPPASAAFSDAHELTRASSIIFDDQPQLTRKHSKRGSVSGRSSTRARRPSSSRSDRSACTSSLRKREEAEVVYETIPAVGGGIVTRPRVYHIASKVQPPEVDWDDEDTARPSQYGGTPSTRTGTTRFGSDYGSATMGAQSSRTNTVRGIHDLPHLNSAFVSRDGSEESLIDLPPESYHSSDASLPHALDAERSSVSGSDSRRGLTNPTSRESSYRDLSSQDLHWDHSASSTAPSSSQSLHWDMHSRNDAAARTVNVKAGQNAESNSGLSFRKNKSANHQRSITLGGGGGGGFPLRRPGEGPGMSATPARTRASAAASARSRPGFITYATSPPGDSSGWQRSPPLRASSDRDVAFSTSPGVAQDMLSISPFRDSSLHHGSPRETSNVAGAYASASNSPYTSGHNKGTQGAGAAPTHLSIDASAHFLDLVKSNHTLSPFTRSMEHFTVRSAPVTPGWQTASGNVSVVGSSAASGTGTTSGSSQTGANAKSGKAGSDKTRSQDHLSVGHTVAEPKTHCQADSAAPSSGLPARRRRTFQLGGSSSRDDTASNKPNNTSTGQGEDSQDNSAAPGSDDYGFARYAGSGPQPFRASGSSASSAITDSSSKGNRLGSKDLRRRSRPGSMGPPSEAARLSALRWEAIRE</sequence>
<reference key="1">
    <citation type="journal article" date="2006" name="Nature">
        <title>Insights from the genome of the biotrophic fungal plant pathogen Ustilago maydis.</title>
        <authorList>
            <person name="Kaemper J."/>
            <person name="Kahmann R."/>
            <person name="Boelker M."/>
            <person name="Ma L.-J."/>
            <person name="Brefort T."/>
            <person name="Saville B.J."/>
            <person name="Banuett F."/>
            <person name="Kronstad J.W."/>
            <person name="Gold S.E."/>
            <person name="Mueller O."/>
            <person name="Perlin M.H."/>
            <person name="Woesten H.A.B."/>
            <person name="de Vries R."/>
            <person name="Ruiz-Herrera J."/>
            <person name="Reynaga-Pena C.G."/>
            <person name="Snetselaar K."/>
            <person name="McCann M."/>
            <person name="Perez-Martin J."/>
            <person name="Feldbruegge M."/>
            <person name="Basse C.W."/>
            <person name="Steinberg G."/>
            <person name="Ibeas J.I."/>
            <person name="Holloman W."/>
            <person name="Guzman P."/>
            <person name="Farman M.L."/>
            <person name="Stajich J.E."/>
            <person name="Sentandreu R."/>
            <person name="Gonzalez-Prieto J.M."/>
            <person name="Kennell J.C."/>
            <person name="Molina L."/>
            <person name="Schirawski J."/>
            <person name="Mendoza-Mendoza A."/>
            <person name="Greilinger D."/>
            <person name="Muench K."/>
            <person name="Roessel N."/>
            <person name="Scherer M."/>
            <person name="Vranes M."/>
            <person name="Ladendorf O."/>
            <person name="Vincon V."/>
            <person name="Fuchs U."/>
            <person name="Sandrock B."/>
            <person name="Meng S."/>
            <person name="Ho E.C.H."/>
            <person name="Cahill M.J."/>
            <person name="Boyce K.J."/>
            <person name="Klose J."/>
            <person name="Klosterman S.J."/>
            <person name="Deelstra H.J."/>
            <person name="Ortiz-Castellanos L."/>
            <person name="Li W."/>
            <person name="Sanchez-Alonso P."/>
            <person name="Schreier P.H."/>
            <person name="Haeuser-Hahn I."/>
            <person name="Vaupel M."/>
            <person name="Koopmann E."/>
            <person name="Friedrich G."/>
            <person name="Voss H."/>
            <person name="Schlueter T."/>
            <person name="Margolis J."/>
            <person name="Platt D."/>
            <person name="Swimmer C."/>
            <person name="Gnirke A."/>
            <person name="Chen F."/>
            <person name="Vysotskaia V."/>
            <person name="Mannhaupt G."/>
            <person name="Gueldener U."/>
            <person name="Muensterkoetter M."/>
            <person name="Haase D."/>
            <person name="Oesterheld M."/>
            <person name="Mewes H.-W."/>
            <person name="Mauceli E.W."/>
            <person name="DeCaprio D."/>
            <person name="Wade C.M."/>
            <person name="Butler J."/>
            <person name="Young S.K."/>
            <person name="Jaffe D.B."/>
            <person name="Calvo S.E."/>
            <person name="Nusbaum C."/>
            <person name="Galagan J.E."/>
            <person name="Birren B.W."/>
        </authorList>
    </citation>
    <scope>NUCLEOTIDE SEQUENCE [LARGE SCALE GENOMIC DNA]</scope>
    <source>
        <strain>DSM 14603 / FGSC 9021 / UM521</strain>
    </source>
</reference>
<reference key="2">
    <citation type="submission" date="2014-09" db="EMBL/GenBank/DDBJ databases">
        <authorList>
            <person name="Gueldener U."/>
            <person name="Muensterkoetter M."/>
            <person name="Walter M.C."/>
            <person name="Mannhaupt G."/>
            <person name="Kahmann R."/>
        </authorList>
    </citation>
    <scope>GENOME REANNOTATION</scope>
    <source>
        <strain>DSM 14603 / FGSC 9021 / UM521</strain>
    </source>
</reference>
<accession>Q4PFA7</accession>
<accession>A0A0D1E6T6</accession>
<gene>
    <name evidence="1" type="primary">MDM34</name>
    <name type="ORF">UMAG_01206</name>
</gene>
<feature type="chain" id="PRO_0000384367" description="Mitochondrial distribution and morphology protein 34">
    <location>
        <begin position="1"/>
        <end position="1097"/>
    </location>
</feature>
<feature type="domain" description="SMP-LTD" evidence="1">
    <location>
        <begin position="1"/>
        <end position="198"/>
    </location>
</feature>
<feature type="region of interest" description="Disordered" evidence="2">
    <location>
        <begin position="204"/>
        <end position="305"/>
    </location>
</feature>
<feature type="region of interest" description="Disordered" evidence="2">
    <location>
        <begin position="317"/>
        <end position="343"/>
    </location>
</feature>
<feature type="region of interest" description="Disordered" evidence="2">
    <location>
        <begin position="390"/>
        <end position="427"/>
    </location>
</feature>
<feature type="region of interest" description="Disordered" evidence="2">
    <location>
        <begin position="480"/>
        <end position="520"/>
    </location>
</feature>
<feature type="region of interest" description="Disordered" evidence="2">
    <location>
        <begin position="556"/>
        <end position="600"/>
    </location>
</feature>
<feature type="region of interest" description="Disordered" evidence="2">
    <location>
        <begin position="645"/>
        <end position="675"/>
    </location>
</feature>
<feature type="region of interest" description="Disordered" evidence="2">
    <location>
        <begin position="716"/>
        <end position="817"/>
    </location>
</feature>
<feature type="region of interest" description="Disordered" evidence="2">
    <location>
        <begin position="923"/>
        <end position="1097"/>
    </location>
</feature>
<feature type="compositionally biased region" description="Basic and acidic residues" evidence="2">
    <location>
        <begin position="205"/>
        <end position="229"/>
    </location>
</feature>
<feature type="compositionally biased region" description="Basic residues" evidence="2">
    <location>
        <begin position="252"/>
        <end position="263"/>
    </location>
</feature>
<feature type="compositionally biased region" description="Low complexity" evidence="2">
    <location>
        <begin position="274"/>
        <end position="283"/>
    </location>
</feature>
<feature type="compositionally biased region" description="Basic residues" evidence="2">
    <location>
        <begin position="284"/>
        <end position="293"/>
    </location>
</feature>
<feature type="compositionally biased region" description="Basic and acidic residues" evidence="2">
    <location>
        <begin position="406"/>
        <end position="416"/>
    </location>
</feature>
<feature type="compositionally biased region" description="Low complexity" evidence="2">
    <location>
        <begin position="508"/>
        <end position="519"/>
    </location>
</feature>
<feature type="compositionally biased region" description="Low complexity" evidence="2">
    <location>
        <begin position="572"/>
        <end position="586"/>
    </location>
</feature>
<feature type="compositionally biased region" description="Polar residues" evidence="2">
    <location>
        <begin position="662"/>
        <end position="675"/>
    </location>
</feature>
<feature type="compositionally biased region" description="Low complexity" evidence="2">
    <location>
        <begin position="759"/>
        <end position="779"/>
    </location>
</feature>
<feature type="compositionally biased region" description="Polar residues" evidence="2">
    <location>
        <begin position="784"/>
        <end position="796"/>
    </location>
</feature>
<feature type="compositionally biased region" description="Low complexity" evidence="2">
    <location>
        <begin position="923"/>
        <end position="943"/>
    </location>
</feature>
<feature type="compositionally biased region" description="Polar residues" evidence="2">
    <location>
        <begin position="1004"/>
        <end position="1024"/>
    </location>
</feature>
<feature type="compositionally biased region" description="Low complexity" evidence="2">
    <location>
        <begin position="1045"/>
        <end position="1059"/>
    </location>
</feature>
<comment type="function">
    <text evidence="1">Component of the ERMES/MDM complex, which serves as a molecular tether to connect the endoplasmic reticulum (ER) and mitochondria. Components of this complex are involved in the control of mitochondrial shape and protein biogenesis, and function in nonvesicular lipid trafficking between the ER and mitochondria. MDM34 is required for the interaction of the ER-resident membrane protein MMM1 and the outer mitochondrial membrane-resident beta-barrel protein MDM10.</text>
</comment>
<comment type="subunit">
    <text evidence="1">Component of the ER-mitochondria encounter structure (ERMES) or MDM complex, composed of MMM1, MDM10, MDM12 and MDM34.</text>
</comment>
<comment type="subcellular location">
    <subcellularLocation>
        <location evidence="1">Mitochondrion outer membrane</location>
        <topology evidence="1">Multi-pass membrane protein</topology>
    </subcellularLocation>
    <text evidence="1">The ERMES/MDM complex localizes to a few discrete foci (around 10 per single cell), that represent mitochondria-endoplasmic reticulum junctions. These foci are often found next to mtDNA nucleoids.</text>
</comment>
<comment type="domain">
    <text evidence="1">Lacks alpha-helical transmembrane segments, suggesting that it resides in the membrane via beta-sheet conformations similar to those predicted for other outer membrane proteins and porin.</text>
</comment>
<comment type="domain">
    <text evidence="1">The SMP-LTD domain is a barrel-like domain that can bind various types of glycerophospholipids in its interior and mediate their transfer between two adjacent bilayers.</text>
</comment>
<comment type="similarity">
    <text evidence="1">Belongs to the MDM34 family.</text>
</comment>
<protein>
    <recommendedName>
        <fullName evidence="1">Mitochondrial distribution and morphology protein 34</fullName>
    </recommendedName>
</protein>
<evidence type="ECO:0000255" key="1">
    <source>
        <dbReference type="HAMAP-Rule" id="MF_03105"/>
    </source>
</evidence>
<evidence type="ECO:0000256" key="2">
    <source>
        <dbReference type="SAM" id="MobiDB-lite"/>
    </source>
</evidence>
<name>MDM34_MYCMD</name>
<keyword id="KW-0445">Lipid transport</keyword>
<keyword id="KW-0446">Lipid-binding</keyword>
<keyword id="KW-0472">Membrane</keyword>
<keyword id="KW-0496">Mitochondrion</keyword>
<keyword id="KW-1000">Mitochondrion outer membrane</keyword>
<keyword id="KW-1185">Reference proteome</keyword>
<keyword id="KW-0812">Transmembrane</keyword>
<keyword id="KW-1134">Transmembrane beta strand</keyword>
<keyword id="KW-0813">Transport</keyword>
<dbReference type="EMBL" id="CM003141">
    <property type="protein sequence ID" value="KIS71306.1"/>
    <property type="molecule type" value="Genomic_DNA"/>
</dbReference>
<dbReference type="RefSeq" id="XP_011387143.1">
    <property type="nucleotide sequence ID" value="XM_011388841.1"/>
</dbReference>
<dbReference type="STRING" id="237631.Q4PFA7"/>
<dbReference type="EnsemblFungi" id="KIS71306">
    <property type="protein sequence ID" value="KIS71306"/>
    <property type="gene ID" value="UMAG_01206"/>
</dbReference>
<dbReference type="GeneID" id="23562299"/>
<dbReference type="KEGG" id="uma:UMAG_01206"/>
<dbReference type="VEuPathDB" id="FungiDB:UMAG_01206"/>
<dbReference type="eggNOG" id="ENOG502QT3W">
    <property type="taxonomic scope" value="Eukaryota"/>
</dbReference>
<dbReference type="HOGENOM" id="CLU_010017_0_0_1"/>
<dbReference type="InParanoid" id="Q4PFA7"/>
<dbReference type="OMA" id="PVTPGWQ"/>
<dbReference type="OrthoDB" id="17927at2759"/>
<dbReference type="Proteomes" id="UP000000561">
    <property type="component" value="Chromosome 2"/>
</dbReference>
<dbReference type="GO" id="GO:0032865">
    <property type="term" value="C:ERMES complex"/>
    <property type="evidence" value="ECO:0000318"/>
    <property type="project" value="GO_Central"/>
</dbReference>
<dbReference type="GO" id="GO:0008289">
    <property type="term" value="F:lipid binding"/>
    <property type="evidence" value="ECO:0007669"/>
    <property type="project" value="UniProtKB-KW"/>
</dbReference>
<dbReference type="GO" id="GO:0000002">
    <property type="term" value="P:mitochondrial genome maintenance"/>
    <property type="evidence" value="ECO:0007669"/>
    <property type="project" value="UniProtKB-UniRule"/>
</dbReference>
<dbReference type="GO" id="GO:0007005">
    <property type="term" value="P:mitochondrion organization"/>
    <property type="evidence" value="ECO:0000318"/>
    <property type="project" value="GO_Central"/>
</dbReference>
<dbReference type="GO" id="GO:1990456">
    <property type="term" value="P:mitochondrion-endoplasmic reticulum membrane tethering"/>
    <property type="evidence" value="ECO:0000318"/>
    <property type="project" value="GO_Central"/>
</dbReference>
<dbReference type="GO" id="GO:0015914">
    <property type="term" value="P:phospholipid transport"/>
    <property type="evidence" value="ECO:0000318"/>
    <property type="project" value="GO_Central"/>
</dbReference>
<dbReference type="CDD" id="cd21673">
    <property type="entry name" value="SMP_Mdm34"/>
    <property type="match status" value="1"/>
</dbReference>
<dbReference type="HAMAP" id="MF_03105">
    <property type="entry name" value="Mdm34"/>
    <property type="match status" value="1"/>
</dbReference>
<dbReference type="InterPro" id="IPR027536">
    <property type="entry name" value="Mdm34"/>
</dbReference>
<dbReference type="InterPro" id="IPR031468">
    <property type="entry name" value="SMP_LBD"/>
</dbReference>
<dbReference type="PANTHER" id="PTHR28185">
    <property type="entry name" value="MITOCHONDRIAL DISTRIBUTION AND MORPHOLOGY PROTEIN 34"/>
    <property type="match status" value="1"/>
</dbReference>
<dbReference type="PANTHER" id="PTHR28185:SF1">
    <property type="entry name" value="MITOCHONDRIAL DISTRIBUTION AND MORPHOLOGY PROTEIN 34"/>
    <property type="match status" value="1"/>
</dbReference>
<dbReference type="PROSITE" id="PS51847">
    <property type="entry name" value="SMP"/>
    <property type="match status" value="1"/>
</dbReference>